<name>ALX_ECOL6</name>
<feature type="chain" id="PRO_0000103411" description="Putative membrane-bound redox modulator Alx">
    <location>
        <begin position="1"/>
        <end position="321"/>
    </location>
</feature>
<feature type="topological domain" description="Periplasmic" evidence="2">
    <location>
        <begin position="1"/>
        <end position="6"/>
    </location>
</feature>
<feature type="transmembrane region" description="Helical" evidence="2">
    <location>
        <begin position="7"/>
        <end position="27"/>
    </location>
</feature>
<feature type="topological domain" description="Cytoplasmic" evidence="2">
    <location>
        <begin position="28"/>
        <end position="43"/>
    </location>
</feature>
<feature type="transmembrane region" description="Helical" evidence="2">
    <location>
        <begin position="44"/>
        <end position="64"/>
    </location>
</feature>
<feature type="topological domain" description="Periplasmic" evidence="2">
    <location>
        <begin position="65"/>
        <end position="89"/>
    </location>
</feature>
<feature type="transmembrane region" description="Helical" evidence="2">
    <location>
        <begin position="90"/>
        <end position="110"/>
    </location>
</feature>
<feature type="topological domain" description="Cytoplasmic" evidence="2">
    <location>
        <begin position="111"/>
        <end position="113"/>
    </location>
</feature>
<feature type="transmembrane region" description="Helical" evidence="2">
    <location>
        <begin position="114"/>
        <end position="134"/>
    </location>
</feature>
<feature type="topological domain" description="Periplasmic" evidence="2">
    <location>
        <position position="135"/>
    </location>
</feature>
<feature type="transmembrane region" description="Helical" evidence="2">
    <location>
        <begin position="136"/>
        <end position="156"/>
    </location>
</feature>
<feature type="topological domain" description="Cytoplasmic" evidence="2">
    <location>
        <begin position="157"/>
        <end position="198"/>
    </location>
</feature>
<feature type="transmembrane region" description="Helical" evidence="2">
    <location>
        <begin position="199"/>
        <end position="219"/>
    </location>
</feature>
<feature type="topological domain" description="Periplasmic" evidence="2">
    <location>
        <begin position="220"/>
        <end position="225"/>
    </location>
</feature>
<feature type="transmembrane region" description="Helical" evidence="2">
    <location>
        <begin position="226"/>
        <end position="246"/>
    </location>
</feature>
<feature type="topological domain" description="Cytoplasmic" evidence="2">
    <location>
        <begin position="247"/>
        <end position="261"/>
    </location>
</feature>
<feature type="transmembrane region" description="Helical" evidence="2">
    <location>
        <begin position="262"/>
        <end position="282"/>
    </location>
</feature>
<feature type="topological domain" description="Periplasmic" evidence="2">
    <location>
        <begin position="283"/>
        <end position="286"/>
    </location>
</feature>
<feature type="transmembrane region" description="Helical" evidence="2">
    <location>
        <begin position="287"/>
        <end position="307"/>
    </location>
</feature>
<feature type="topological domain" description="Cytoplasmic" evidence="2">
    <location>
        <begin position="308"/>
        <end position="321"/>
    </location>
</feature>
<evidence type="ECO:0000250" key="1">
    <source>
        <dbReference type="UniProtKB" id="P42601"/>
    </source>
</evidence>
<evidence type="ECO:0000255" key="2"/>
<evidence type="ECO:0000305" key="3"/>
<protein>
    <recommendedName>
        <fullName>Putative membrane-bound redox modulator Alx</fullName>
    </recommendedName>
</protein>
<dbReference type="EMBL" id="AE014075">
    <property type="protein sequence ID" value="AAN82291.1"/>
    <property type="molecule type" value="Genomic_DNA"/>
</dbReference>
<dbReference type="RefSeq" id="WP_001098826.1">
    <property type="nucleotide sequence ID" value="NZ_CP051263.1"/>
</dbReference>
<dbReference type="STRING" id="199310.c3846"/>
<dbReference type="KEGG" id="ecc:c3846"/>
<dbReference type="eggNOG" id="COG0861">
    <property type="taxonomic scope" value="Bacteria"/>
</dbReference>
<dbReference type="HOGENOM" id="CLU_045644_1_2_6"/>
<dbReference type="BioCyc" id="ECOL199310:C3846-MONOMER"/>
<dbReference type="Proteomes" id="UP000001410">
    <property type="component" value="Chromosome"/>
</dbReference>
<dbReference type="GO" id="GO:0005886">
    <property type="term" value="C:plasma membrane"/>
    <property type="evidence" value="ECO:0007669"/>
    <property type="project" value="UniProtKB-SubCell"/>
</dbReference>
<dbReference type="InterPro" id="IPR005496">
    <property type="entry name" value="Integral_membrane_TerC"/>
</dbReference>
<dbReference type="InterPro" id="IPR022369">
    <property type="entry name" value="Integral_membrane_TerC_rswitch"/>
</dbReference>
<dbReference type="NCBIfam" id="TIGR03718">
    <property type="entry name" value="R_switched_Alx"/>
    <property type="match status" value="1"/>
</dbReference>
<dbReference type="PANTHER" id="PTHR30238">
    <property type="entry name" value="MEMBRANE BOUND PREDICTED REDOX MODULATOR"/>
    <property type="match status" value="1"/>
</dbReference>
<dbReference type="PANTHER" id="PTHR30238:SF0">
    <property type="entry name" value="THYLAKOID MEMBRANE PROTEIN TERC, CHLOROPLASTIC"/>
    <property type="match status" value="1"/>
</dbReference>
<dbReference type="Pfam" id="PF03741">
    <property type="entry name" value="TerC"/>
    <property type="match status" value="1"/>
</dbReference>
<comment type="function">
    <text evidence="1">Has been proposed to be a redox modulator.</text>
</comment>
<comment type="subcellular location">
    <subcellularLocation>
        <location evidence="1">Cell inner membrane</location>
        <topology evidence="3">Multi-pass membrane protein</topology>
    </subcellularLocation>
</comment>
<comment type="similarity">
    <text evidence="3">Belongs to the TerC family.</text>
</comment>
<proteinExistence type="inferred from homology"/>
<gene>
    <name type="primary">alx</name>
    <name type="ordered locus">c3846</name>
</gene>
<organism>
    <name type="scientific">Escherichia coli O6:H1 (strain CFT073 / ATCC 700928 / UPEC)</name>
    <dbReference type="NCBI Taxonomy" id="199310"/>
    <lineage>
        <taxon>Bacteria</taxon>
        <taxon>Pseudomonadati</taxon>
        <taxon>Pseudomonadota</taxon>
        <taxon>Gammaproteobacteria</taxon>
        <taxon>Enterobacterales</taxon>
        <taxon>Enterobacteriaceae</taxon>
        <taxon>Escherichia</taxon>
    </lineage>
</organism>
<accession>Q8FDE1</accession>
<sequence length="321" mass="36053">MNTVGTPLLWGGFAVVVTIMLAIDLLLQGRRGAHAMTMKQAAAWSLVWVTLSLLFNAAFWWYLVQTEGRAVADPQALAFLTGYLIEKSLAVDNVFVWLMLFSYFSVPAALQRRVLVYGVLGAIVLRTIMIFTGSWLISQFDWILYIFGAFLLFTGVKMALAHEDESGIGDKPLVRWLRGHLRMTDTIDNEHFFVRKNGLLYATPLMLVLILVELSDVIFAVDSIPAIFAVTTDPFIVLTSNLFAILGLRAMYFLLAGVAERFSMLKYGLAVILVFIGIKMLIVDFYHIPIAVSLGVVFGILVMTFIINAWVNYRHDKQRVE</sequence>
<reference key="1">
    <citation type="journal article" date="2002" name="Proc. Natl. Acad. Sci. U.S.A.">
        <title>Extensive mosaic structure revealed by the complete genome sequence of uropathogenic Escherichia coli.</title>
        <authorList>
            <person name="Welch R.A."/>
            <person name="Burland V."/>
            <person name="Plunkett G. III"/>
            <person name="Redford P."/>
            <person name="Roesch P."/>
            <person name="Rasko D."/>
            <person name="Buckles E.L."/>
            <person name="Liou S.-R."/>
            <person name="Boutin A."/>
            <person name="Hackett J."/>
            <person name="Stroud D."/>
            <person name="Mayhew G.F."/>
            <person name="Rose D.J."/>
            <person name="Zhou S."/>
            <person name="Schwartz D.C."/>
            <person name="Perna N.T."/>
            <person name="Mobley H.L.T."/>
            <person name="Donnenberg M.S."/>
            <person name="Blattner F.R."/>
        </authorList>
    </citation>
    <scope>NUCLEOTIDE SEQUENCE [LARGE SCALE GENOMIC DNA]</scope>
    <source>
        <strain>CFT073 / ATCC 700928 / UPEC</strain>
    </source>
</reference>
<keyword id="KW-0997">Cell inner membrane</keyword>
<keyword id="KW-1003">Cell membrane</keyword>
<keyword id="KW-0472">Membrane</keyword>
<keyword id="KW-1185">Reference proteome</keyword>
<keyword id="KW-0812">Transmembrane</keyword>
<keyword id="KW-1133">Transmembrane helix</keyword>